<reference key="1">
    <citation type="journal article" date="2010" name="Appl. Environ. Microbiol.">
        <title>The genome sequence of Psychrobacter arcticus 273-4, a psychroactive Siberian permafrost bacterium, reveals mechanisms for adaptation to low-temperature growth.</title>
        <authorList>
            <person name="Ayala-del-Rio H.L."/>
            <person name="Chain P.S."/>
            <person name="Grzymski J.J."/>
            <person name="Ponder M.A."/>
            <person name="Ivanova N."/>
            <person name="Bergholz P.W."/>
            <person name="Di Bartolo G."/>
            <person name="Hauser L."/>
            <person name="Land M."/>
            <person name="Bakermans C."/>
            <person name="Rodrigues D."/>
            <person name="Klappenbach J."/>
            <person name="Zarka D."/>
            <person name="Larimer F."/>
            <person name="Richardson P."/>
            <person name="Murray A."/>
            <person name="Thomashow M."/>
            <person name="Tiedje J.M."/>
        </authorList>
    </citation>
    <scope>NUCLEOTIDE SEQUENCE [LARGE SCALE GENOMIC DNA]</scope>
    <source>
        <strain>DSM 17307 / VKM B-2377 / 273-4</strain>
    </source>
</reference>
<accession>Q4FUR3</accession>
<protein>
    <recommendedName>
        <fullName evidence="1">Ferrochelatase</fullName>
        <ecNumber evidence="1">4.98.1.1</ecNumber>
    </recommendedName>
    <alternativeName>
        <fullName evidence="1">Heme synthase</fullName>
    </alternativeName>
    <alternativeName>
        <fullName evidence="1">Protoheme ferro-lyase</fullName>
    </alternativeName>
</protein>
<proteinExistence type="inferred from homology"/>
<feature type="chain" id="PRO_1000019353" description="Ferrochelatase">
    <location>
        <begin position="1"/>
        <end position="339"/>
    </location>
</feature>
<feature type="binding site" evidence="1">
    <location>
        <position position="202"/>
    </location>
    <ligand>
        <name>Fe cation</name>
        <dbReference type="ChEBI" id="CHEBI:24875"/>
    </ligand>
</feature>
<feature type="binding site" evidence="1">
    <location>
        <position position="283"/>
    </location>
    <ligand>
        <name>Fe cation</name>
        <dbReference type="ChEBI" id="CHEBI:24875"/>
    </ligand>
</feature>
<dbReference type="EC" id="4.98.1.1" evidence="1"/>
<dbReference type="EMBL" id="CP000082">
    <property type="protein sequence ID" value="AAZ18245.1"/>
    <property type="molecule type" value="Genomic_DNA"/>
</dbReference>
<dbReference type="RefSeq" id="WP_011279683.1">
    <property type="nucleotide sequence ID" value="NC_007204.1"/>
</dbReference>
<dbReference type="SMR" id="Q4FUR3"/>
<dbReference type="STRING" id="259536.Psyc_0376"/>
<dbReference type="KEGG" id="par:Psyc_0376"/>
<dbReference type="eggNOG" id="COG0276">
    <property type="taxonomic scope" value="Bacteria"/>
</dbReference>
<dbReference type="HOGENOM" id="CLU_018884_0_0_6"/>
<dbReference type="OrthoDB" id="9809741at2"/>
<dbReference type="UniPathway" id="UPA00252">
    <property type="reaction ID" value="UER00325"/>
</dbReference>
<dbReference type="Proteomes" id="UP000000546">
    <property type="component" value="Chromosome"/>
</dbReference>
<dbReference type="GO" id="GO:0005737">
    <property type="term" value="C:cytoplasm"/>
    <property type="evidence" value="ECO:0007669"/>
    <property type="project" value="UniProtKB-SubCell"/>
</dbReference>
<dbReference type="GO" id="GO:0004325">
    <property type="term" value="F:ferrochelatase activity"/>
    <property type="evidence" value="ECO:0007669"/>
    <property type="project" value="UniProtKB-UniRule"/>
</dbReference>
<dbReference type="GO" id="GO:0046872">
    <property type="term" value="F:metal ion binding"/>
    <property type="evidence" value="ECO:0007669"/>
    <property type="project" value="UniProtKB-KW"/>
</dbReference>
<dbReference type="GO" id="GO:0006783">
    <property type="term" value="P:heme biosynthetic process"/>
    <property type="evidence" value="ECO:0007669"/>
    <property type="project" value="UniProtKB-UniRule"/>
</dbReference>
<dbReference type="CDD" id="cd00419">
    <property type="entry name" value="Ferrochelatase_C"/>
    <property type="match status" value="1"/>
</dbReference>
<dbReference type="CDD" id="cd03411">
    <property type="entry name" value="Ferrochelatase_N"/>
    <property type="match status" value="1"/>
</dbReference>
<dbReference type="FunFam" id="3.40.50.1400:FF:000002">
    <property type="entry name" value="Ferrochelatase"/>
    <property type="match status" value="1"/>
</dbReference>
<dbReference type="Gene3D" id="3.40.50.1400">
    <property type="match status" value="2"/>
</dbReference>
<dbReference type="HAMAP" id="MF_00323">
    <property type="entry name" value="Ferrochelatase"/>
    <property type="match status" value="1"/>
</dbReference>
<dbReference type="InterPro" id="IPR001015">
    <property type="entry name" value="Ferrochelatase"/>
</dbReference>
<dbReference type="InterPro" id="IPR019772">
    <property type="entry name" value="Ferrochelatase_AS"/>
</dbReference>
<dbReference type="InterPro" id="IPR033644">
    <property type="entry name" value="Ferrochelatase_C"/>
</dbReference>
<dbReference type="InterPro" id="IPR033659">
    <property type="entry name" value="Ferrochelatase_N"/>
</dbReference>
<dbReference type="NCBIfam" id="TIGR00109">
    <property type="entry name" value="hemH"/>
    <property type="match status" value="1"/>
</dbReference>
<dbReference type="PANTHER" id="PTHR11108">
    <property type="entry name" value="FERROCHELATASE"/>
    <property type="match status" value="1"/>
</dbReference>
<dbReference type="PANTHER" id="PTHR11108:SF1">
    <property type="entry name" value="FERROCHELATASE, MITOCHONDRIAL"/>
    <property type="match status" value="1"/>
</dbReference>
<dbReference type="Pfam" id="PF00762">
    <property type="entry name" value="Ferrochelatase"/>
    <property type="match status" value="1"/>
</dbReference>
<dbReference type="SUPFAM" id="SSF53800">
    <property type="entry name" value="Chelatase"/>
    <property type="match status" value="1"/>
</dbReference>
<dbReference type="PROSITE" id="PS00534">
    <property type="entry name" value="FERROCHELATASE"/>
    <property type="match status" value="1"/>
</dbReference>
<gene>
    <name evidence="1" type="primary">hemH</name>
    <name type="ordered locus">Psyc_0376</name>
</gene>
<comment type="function">
    <text evidence="1">Catalyzes the ferrous insertion into protoporphyrin IX.</text>
</comment>
<comment type="catalytic activity">
    <reaction evidence="1">
        <text>heme b + 2 H(+) = protoporphyrin IX + Fe(2+)</text>
        <dbReference type="Rhea" id="RHEA:22584"/>
        <dbReference type="ChEBI" id="CHEBI:15378"/>
        <dbReference type="ChEBI" id="CHEBI:29033"/>
        <dbReference type="ChEBI" id="CHEBI:57306"/>
        <dbReference type="ChEBI" id="CHEBI:60344"/>
        <dbReference type="EC" id="4.98.1.1"/>
    </reaction>
</comment>
<comment type="pathway">
    <text evidence="1">Porphyrin-containing compound metabolism; protoheme biosynthesis; protoheme from protoporphyrin-IX: step 1/1.</text>
</comment>
<comment type="subcellular location">
    <subcellularLocation>
        <location evidence="1">Cytoplasm</location>
    </subcellularLocation>
</comment>
<comment type="similarity">
    <text evidence="1">Belongs to the ferrochelatase family.</text>
</comment>
<organism>
    <name type="scientific">Psychrobacter arcticus (strain DSM 17307 / VKM B-2377 / 273-4)</name>
    <dbReference type="NCBI Taxonomy" id="259536"/>
    <lineage>
        <taxon>Bacteria</taxon>
        <taxon>Pseudomonadati</taxon>
        <taxon>Pseudomonadota</taxon>
        <taxon>Gammaproteobacteria</taxon>
        <taxon>Moraxellales</taxon>
        <taxon>Moraxellaceae</taxon>
        <taxon>Psychrobacter</taxon>
    </lineage>
</organism>
<evidence type="ECO:0000255" key="1">
    <source>
        <dbReference type="HAMAP-Rule" id="MF_00323"/>
    </source>
</evidence>
<keyword id="KW-0963">Cytoplasm</keyword>
<keyword id="KW-0350">Heme biosynthesis</keyword>
<keyword id="KW-0408">Iron</keyword>
<keyword id="KW-0456">Lyase</keyword>
<keyword id="KW-0479">Metal-binding</keyword>
<keyword id="KW-0627">Porphyrin biosynthesis</keyword>
<keyword id="KW-1185">Reference proteome</keyword>
<name>HEMH_PSYA2</name>
<sequence length="339" mass="38179">MKPDLPPRIAVLLVNLGTPDEPTAPAVRRYLKQFLSDPRVIEIPKFLWAIILNLFVLPSRPKRVAEAYASIWDGDSPMRNILNTQVEMLDKRLAERAAPFRVSVHAAMSYGNPGLPDVMDKLRSEGVDHFVMLPVFPQYSATSTGAVYDAMTKWSLKQRNLPNMTIVKDYFAHPLYIKALADSIRRFQAIHGKPEKLMFSFHGIPQPYADKGDPYPKRCKCTAAQVAHELGLKPDEWIISFQSRFGKQEWIKPYTDVVLEDWGKSGIRSVQILSPAFSADCLETLEELAIENRETFLKAGGEEYHYIPALNADEAHIDLLEAMSAPLVKGWAGTLDGWA</sequence>